<dbReference type="EMBL" id="DQ821119">
    <property type="protein sequence ID" value="ABG79621.1"/>
    <property type="molecule type" value="Genomic_DNA"/>
</dbReference>
<dbReference type="RefSeq" id="YP_001023722.1">
    <property type="nucleotide sequence ID" value="NC_008829.1"/>
</dbReference>
<dbReference type="GeneID" id="4788240"/>
<dbReference type="GO" id="GO:0009507">
    <property type="term" value="C:chloroplast"/>
    <property type="evidence" value="ECO:0007669"/>
    <property type="project" value="UniProtKB-SubCell"/>
</dbReference>
<dbReference type="GO" id="GO:1990904">
    <property type="term" value="C:ribonucleoprotein complex"/>
    <property type="evidence" value="ECO:0007669"/>
    <property type="project" value="UniProtKB-KW"/>
</dbReference>
<dbReference type="GO" id="GO:0005840">
    <property type="term" value="C:ribosome"/>
    <property type="evidence" value="ECO:0007669"/>
    <property type="project" value="UniProtKB-KW"/>
</dbReference>
<dbReference type="GO" id="GO:0003735">
    <property type="term" value="F:structural constituent of ribosome"/>
    <property type="evidence" value="ECO:0007669"/>
    <property type="project" value="InterPro"/>
</dbReference>
<dbReference type="GO" id="GO:0006412">
    <property type="term" value="P:translation"/>
    <property type="evidence" value="ECO:0007669"/>
    <property type="project" value="UniProtKB-UniRule"/>
</dbReference>
<dbReference type="Gene3D" id="2.20.28.120">
    <property type="entry name" value="Ribosomal protein L33"/>
    <property type="match status" value="1"/>
</dbReference>
<dbReference type="HAMAP" id="MF_00294">
    <property type="entry name" value="Ribosomal_bL33"/>
    <property type="match status" value="1"/>
</dbReference>
<dbReference type="InterPro" id="IPR001705">
    <property type="entry name" value="Ribosomal_bL33"/>
</dbReference>
<dbReference type="InterPro" id="IPR018264">
    <property type="entry name" value="Ribosomal_bL33_CS"/>
</dbReference>
<dbReference type="InterPro" id="IPR038584">
    <property type="entry name" value="Ribosomal_bL33_sf"/>
</dbReference>
<dbReference type="InterPro" id="IPR011332">
    <property type="entry name" value="Ribosomal_zn-bd"/>
</dbReference>
<dbReference type="NCBIfam" id="NF001764">
    <property type="entry name" value="PRK00504.1"/>
    <property type="match status" value="1"/>
</dbReference>
<dbReference type="NCBIfam" id="NF001860">
    <property type="entry name" value="PRK00595.1"/>
    <property type="match status" value="1"/>
</dbReference>
<dbReference type="NCBIfam" id="TIGR01023">
    <property type="entry name" value="rpmG_bact"/>
    <property type="match status" value="1"/>
</dbReference>
<dbReference type="PANTHER" id="PTHR43168">
    <property type="entry name" value="50S RIBOSOMAL PROTEIN L33, CHLOROPLASTIC"/>
    <property type="match status" value="1"/>
</dbReference>
<dbReference type="PANTHER" id="PTHR43168:SF2">
    <property type="entry name" value="LARGE RIBOSOMAL SUBUNIT PROTEIN BL33C"/>
    <property type="match status" value="1"/>
</dbReference>
<dbReference type="Pfam" id="PF00471">
    <property type="entry name" value="Ribosomal_L33"/>
    <property type="match status" value="1"/>
</dbReference>
<dbReference type="SUPFAM" id="SSF57829">
    <property type="entry name" value="Zn-binding ribosomal proteins"/>
    <property type="match status" value="1"/>
</dbReference>
<dbReference type="PROSITE" id="PS00582">
    <property type="entry name" value="RIBOSOMAL_L33"/>
    <property type="match status" value="1"/>
</dbReference>
<reference key="1">
    <citation type="journal article" date="2007" name="Am. Fern J.">
        <title>The complete plastid genome sequence of Angiopteris evecta (G. Forst.) Hoffm. (Marattiaceae).</title>
        <authorList>
            <person name="Roper J.M."/>
            <person name="Hansen S.K."/>
            <person name="Wolf P.G."/>
            <person name="Karol K.G."/>
            <person name="Mandoli D.F."/>
            <person name="Everett K.D.E."/>
            <person name="Kuehl J."/>
            <person name="Boore J.L."/>
        </authorList>
    </citation>
    <scope>NUCLEOTIDE SEQUENCE [LARGE SCALE GENOMIC DNA]</scope>
</reference>
<feature type="chain" id="PRO_0000356783" description="Large ribosomal subunit protein bL33c">
    <location>
        <begin position="1"/>
        <end position="66"/>
    </location>
</feature>
<accession>A2T354</accession>
<protein>
    <recommendedName>
        <fullName evidence="1">Large ribosomal subunit protein bL33c</fullName>
    </recommendedName>
    <alternativeName>
        <fullName evidence="2">50S ribosomal protein L33, chloroplastic</fullName>
    </alternativeName>
</protein>
<organism>
    <name type="scientific">Angiopteris evecta</name>
    <name type="common">Mule's foot fern</name>
    <name type="synonym">Polypodium evectum</name>
    <dbReference type="NCBI Taxonomy" id="13825"/>
    <lineage>
        <taxon>Eukaryota</taxon>
        <taxon>Viridiplantae</taxon>
        <taxon>Streptophyta</taxon>
        <taxon>Embryophyta</taxon>
        <taxon>Tracheophyta</taxon>
        <taxon>Polypodiopsida</taxon>
        <taxon>Marattiidae</taxon>
        <taxon>Marattiales</taxon>
        <taxon>Marattiaceae</taxon>
        <taxon>Angiopteris</taxon>
    </lineage>
</organism>
<name>RK33_ANGEV</name>
<keyword id="KW-0150">Chloroplast</keyword>
<keyword id="KW-0934">Plastid</keyword>
<keyword id="KW-0687">Ribonucleoprotein</keyword>
<keyword id="KW-0689">Ribosomal protein</keyword>
<geneLocation type="chloroplast"/>
<sequence length="66" mass="7830">MAKSKDVRVTITLECISCDRNNSDKRFPGVSRYTTRKNQRNTPTRLELKKFCPYCSEHTIHRELKK</sequence>
<gene>
    <name evidence="1" type="primary">rpl33</name>
</gene>
<evidence type="ECO:0000255" key="1">
    <source>
        <dbReference type="HAMAP-Rule" id="MF_00294"/>
    </source>
</evidence>
<evidence type="ECO:0000305" key="2"/>
<proteinExistence type="inferred from homology"/>
<comment type="subcellular location">
    <subcellularLocation>
        <location>Plastid</location>
        <location>Chloroplast</location>
    </subcellularLocation>
</comment>
<comment type="similarity">
    <text evidence="1">Belongs to the bacterial ribosomal protein bL33 family.</text>
</comment>